<protein>
    <recommendedName>
        <fullName evidence="1">Dihydroorotase</fullName>
        <shortName evidence="1">DHOase</shortName>
        <ecNumber evidence="1">3.5.2.3</ecNumber>
    </recommendedName>
</protein>
<evidence type="ECO:0000255" key="1">
    <source>
        <dbReference type="HAMAP-Rule" id="MF_00219"/>
    </source>
</evidence>
<keyword id="KW-0378">Hydrolase</keyword>
<keyword id="KW-0479">Metal-binding</keyword>
<keyword id="KW-0665">Pyrimidine biosynthesis</keyword>
<keyword id="KW-0862">Zinc</keyword>
<comment type="function">
    <text evidence="1">Catalyzes the reversible cyclization of carbamoyl aspartate to dihydroorotate.</text>
</comment>
<comment type="catalytic activity">
    <reaction evidence="1">
        <text>(S)-dihydroorotate + H2O = N-carbamoyl-L-aspartate + H(+)</text>
        <dbReference type="Rhea" id="RHEA:24296"/>
        <dbReference type="ChEBI" id="CHEBI:15377"/>
        <dbReference type="ChEBI" id="CHEBI:15378"/>
        <dbReference type="ChEBI" id="CHEBI:30864"/>
        <dbReference type="ChEBI" id="CHEBI:32814"/>
        <dbReference type="EC" id="3.5.2.3"/>
    </reaction>
</comment>
<comment type="cofactor">
    <cofactor evidence="1">
        <name>Zn(2+)</name>
        <dbReference type="ChEBI" id="CHEBI:29105"/>
    </cofactor>
    <text evidence="1">Binds 2 Zn(2+) ions per subunit.</text>
</comment>
<comment type="pathway">
    <text evidence="1">Pyrimidine metabolism; UMP biosynthesis via de novo pathway; (S)-dihydroorotate from bicarbonate: step 3/3.</text>
</comment>
<comment type="subunit">
    <text evidence="1">Homodimer.</text>
</comment>
<comment type="similarity">
    <text evidence="1">Belongs to the metallo-dependent hydrolases superfamily. DHOase family. Class II DHOase subfamily.</text>
</comment>
<reference key="1">
    <citation type="journal article" date="2009" name="PLoS Genet.">
        <title>Organised genome dynamics in the Escherichia coli species results in highly diverse adaptive paths.</title>
        <authorList>
            <person name="Touchon M."/>
            <person name="Hoede C."/>
            <person name="Tenaillon O."/>
            <person name="Barbe V."/>
            <person name="Baeriswyl S."/>
            <person name="Bidet P."/>
            <person name="Bingen E."/>
            <person name="Bonacorsi S."/>
            <person name="Bouchier C."/>
            <person name="Bouvet O."/>
            <person name="Calteau A."/>
            <person name="Chiapello H."/>
            <person name="Clermont O."/>
            <person name="Cruveiller S."/>
            <person name="Danchin A."/>
            <person name="Diard M."/>
            <person name="Dossat C."/>
            <person name="Karoui M.E."/>
            <person name="Frapy E."/>
            <person name="Garry L."/>
            <person name="Ghigo J.M."/>
            <person name="Gilles A.M."/>
            <person name="Johnson J."/>
            <person name="Le Bouguenec C."/>
            <person name="Lescat M."/>
            <person name="Mangenot S."/>
            <person name="Martinez-Jehanne V."/>
            <person name="Matic I."/>
            <person name="Nassif X."/>
            <person name="Oztas S."/>
            <person name="Petit M.A."/>
            <person name="Pichon C."/>
            <person name="Rouy Z."/>
            <person name="Ruf C.S."/>
            <person name="Schneider D."/>
            <person name="Tourret J."/>
            <person name="Vacherie B."/>
            <person name="Vallenet D."/>
            <person name="Medigue C."/>
            <person name="Rocha E.P.C."/>
            <person name="Denamur E."/>
        </authorList>
    </citation>
    <scope>NUCLEOTIDE SEQUENCE [LARGE SCALE GENOMIC DNA]</scope>
    <source>
        <strain>UMN026 / ExPEC</strain>
    </source>
</reference>
<name>PYRC_ECOLU</name>
<organism>
    <name type="scientific">Escherichia coli O17:K52:H18 (strain UMN026 / ExPEC)</name>
    <dbReference type="NCBI Taxonomy" id="585056"/>
    <lineage>
        <taxon>Bacteria</taxon>
        <taxon>Pseudomonadati</taxon>
        <taxon>Pseudomonadota</taxon>
        <taxon>Gammaproteobacteria</taxon>
        <taxon>Enterobacterales</taxon>
        <taxon>Enterobacteriaceae</taxon>
        <taxon>Escherichia</taxon>
    </lineage>
</organism>
<proteinExistence type="inferred from homology"/>
<dbReference type="EC" id="3.5.2.3" evidence="1"/>
<dbReference type="EMBL" id="CU928163">
    <property type="protein sequence ID" value="CAR12446.1"/>
    <property type="molecule type" value="Genomic_DNA"/>
</dbReference>
<dbReference type="RefSeq" id="WP_000126528.1">
    <property type="nucleotide sequence ID" value="NC_011751.1"/>
</dbReference>
<dbReference type="RefSeq" id="YP_002411989.1">
    <property type="nucleotide sequence ID" value="NC_011751.1"/>
</dbReference>
<dbReference type="SMR" id="B7NAT7"/>
<dbReference type="STRING" id="585056.ECUMN_1236"/>
<dbReference type="MEROPS" id="M38.A02"/>
<dbReference type="KEGG" id="eum:ECUMN_1236"/>
<dbReference type="PATRIC" id="fig|585056.7.peg.1440"/>
<dbReference type="HOGENOM" id="CLU_041558_1_0_6"/>
<dbReference type="UniPathway" id="UPA00070">
    <property type="reaction ID" value="UER00117"/>
</dbReference>
<dbReference type="Proteomes" id="UP000007097">
    <property type="component" value="Chromosome"/>
</dbReference>
<dbReference type="GO" id="GO:0005829">
    <property type="term" value="C:cytosol"/>
    <property type="evidence" value="ECO:0007669"/>
    <property type="project" value="TreeGrafter"/>
</dbReference>
<dbReference type="GO" id="GO:0004151">
    <property type="term" value="F:dihydroorotase activity"/>
    <property type="evidence" value="ECO:0007669"/>
    <property type="project" value="UniProtKB-UniRule"/>
</dbReference>
<dbReference type="GO" id="GO:0008270">
    <property type="term" value="F:zinc ion binding"/>
    <property type="evidence" value="ECO:0007669"/>
    <property type="project" value="UniProtKB-UniRule"/>
</dbReference>
<dbReference type="GO" id="GO:0006207">
    <property type="term" value="P:'de novo' pyrimidine nucleobase biosynthetic process"/>
    <property type="evidence" value="ECO:0007669"/>
    <property type="project" value="TreeGrafter"/>
</dbReference>
<dbReference type="GO" id="GO:0044205">
    <property type="term" value="P:'de novo' UMP biosynthetic process"/>
    <property type="evidence" value="ECO:0007669"/>
    <property type="project" value="UniProtKB-UniRule"/>
</dbReference>
<dbReference type="CDD" id="cd01294">
    <property type="entry name" value="DHOase"/>
    <property type="match status" value="1"/>
</dbReference>
<dbReference type="FunFam" id="3.20.20.140:FF:000006">
    <property type="entry name" value="Dihydroorotase"/>
    <property type="match status" value="1"/>
</dbReference>
<dbReference type="Gene3D" id="3.20.20.140">
    <property type="entry name" value="Metal-dependent hydrolases"/>
    <property type="match status" value="1"/>
</dbReference>
<dbReference type="HAMAP" id="MF_00219">
    <property type="entry name" value="PyrC_classII"/>
    <property type="match status" value="1"/>
</dbReference>
<dbReference type="InterPro" id="IPR006680">
    <property type="entry name" value="Amidohydro-rel"/>
</dbReference>
<dbReference type="InterPro" id="IPR004721">
    <property type="entry name" value="DHOdimr"/>
</dbReference>
<dbReference type="InterPro" id="IPR002195">
    <property type="entry name" value="Dihydroorotase_CS"/>
</dbReference>
<dbReference type="InterPro" id="IPR032466">
    <property type="entry name" value="Metal_Hydrolase"/>
</dbReference>
<dbReference type="NCBIfam" id="TIGR00856">
    <property type="entry name" value="pyrC_dimer"/>
    <property type="match status" value="1"/>
</dbReference>
<dbReference type="PANTHER" id="PTHR43137">
    <property type="entry name" value="DIHYDROOROTASE"/>
    <property type="match status" value="1"/>
</dbReference>
<dbReference type="PANTHER" id="PTHR43137:SF1">
    <property type="entry name" value="DIHYDROOROTASE"/>
    <property type="match status" value="1"/>
</dbReference>
<dbReference type="Pfam" id="PF01979">
    <property type="entry name" value="Amidohydro_1"/>
    <property type="match status" value="1"/>
</dbReference>
<dbReference type="PIRSF" id="PIRSF001237">
    <property type="entry name" value="DHOdimr"/>
    <property type="match status" value="1"/>
</dbReference>
<dbReference type="SUPFAM" id="SSF51556">
    <property type="entry name" value="Metallo-dependent hydrolases"/>
    <property type="match status" value="1"/>
</dbReference>
<dbReference type="PROSITE" id="PS00482">
    <property type="entry name" value="DIHYDROOROTASE_1"/>
    <property type="match status" value="1"/>
</dbReference>
<dbReference type="PROSITE" id="PS00483">
    <property type="entry name" value="DIHYDROOROTASE_2"/>
    <property type="match status" value="1"/>
</dbReference>
<accession>B7NAT7</accession>
<sequence>MTAPSQVLKIRRPDDWHLHLRDGDMLKTVVPYTSEIYGRAIVMPNLAPPVTTVEAAVAYRQRILDAVPAGHDFSPLMTCYLTDSLDPNELERGFNEGVFTAAKLYPANATTNSSHGVTSVDAIMPVLERMEKIGMPLLVHGEVTHADIDIFDREARFIESVMEPLRQRLTALKVVFEHITTKDAADYVRNGNERLAATITPQHLMFNRNHMLVGGVRPHLYCLPILKRNIHQQALRELVASGFNRVFLGTDSAPHARHRKESSCGCAGCFNAPTALGSYATVFEEMNALQHFEAFCSVNGPQFYGLPVNDTFIELVREEQQVAESIALTDDTLVPFLAGETVRWSVKQ</sequence>
<feature type="chain" id="PRO_1000193072" description="Dihydroorotase">
    <location>
        <begin position="1"/>
        <end position="348"/>
    </location>
</feature>
<feature type="active site" evidence="1">
    <location>
        <position position="251"/>
    </location>
</feature>
<feature type="binding site" evidence="1">
    <location>
        <position position="17"/>
    </location>
    <ligand>
        <name>Zn(2+)</name>
        <dbReference type="ChEBI" id="CHEBI:29105"/>
        <label>1</label>
    </ligand>
</feature>
<feature type="binding site" evidence="1">
    <location>
        <begin position="19"/>
        <end position="21"/>
    </location>
    <ligand>
        <name>substrate</name>
    </ligand>
</feature>
<feature type="binding site" evidence="1">
    <location>
        <position position="19"/>
    </location>
    <ligand>
        <name>Zn(2+)</name>
        <dbReference type="ChEBI" id="CHEBI:29105"/>
        <label>1</label>
    </ligand>
</feature>
<feature type="binding site" evidence="1">
    <location>
        <position position="45"/>
    </location>
    <ligand>
        <name>substrate</name>
    </ligand>
</feature>
<feature type="binding site" description="via carbamate group" evidence="1">
    <location>
        <position position="103"/>
    </location>
    <ligand>
        <name>Zn(2+)</name>
        <dbReference type="ChEBI" id="CHEBI:29105"/>
        <label>1</label>
    </ligand>
</feature>
<feature type="binding site" description="via carbamate group" evidence="1">
    <location>
        <position position="103"/>
    </location>
    <ligand>
        <name>Zn(2+)</name>
        <dbReference type="ChEBI" id="CHEBI:29105"/>
        <label>2</label>
    </ligand>
</feature>
<feature type="binding site" evidence="1">
    <location>
        <position position="140"/>
    </location>
    <ligand>
        <name>substrate</name>
    </ligand>
</feature>
<feature type="binding site" evidence="1">
    <location>
        <position position="140"/>
    </location>
    <ligand>
        <name>Zn(2+)</name>
        <dbReference type="ChEBI" id="CHEBI:29105"/>
        <label>2</label>
    </ligand>
</feature>
<feature type="binding site" evidence="1">
    <location>
        <position position="178"/>
    </location>
    <ligand>
        <name>Zn(2+)</name>
        <dbReference type="ChEBI" id="CHEBI:29105"/>
        <label>2</label>
    </ligand>
</feature>
<feature type="binding site" evidence="1">
    <location>
        <position position="223"/>
    </location>
    <ligand>
        <name>substrate</name>
    </ligand>
</feature>
<feature type="binding site" evidence="1">
    <location>
        <position position="251"/>
    </location>
    <ligand>
        <name>Zn(2+)</name>
        <dbReference type="ChEBI" id="CHEBI:29105"/>
        <label>1</label>
    </ligand>
</feature>
<feature type="binding site" evidence="1">
    <location>
        <position position="255"/>
    </location>
    <ligand>
        <name>substrate</name>
    </ligand>
</feature>
<feature type="binding site" evidence="1">
    <location>
        <position position="267"/>
    </location>
    <ligand>
        <name>substrate</name>
    </ligand>
</feature>
<feature type="modified residue" description="N6-carboxylysine" evidence="1">
    <location>
        <position position="103"/>
    </location>
</feature>
<gene>
    <name evidence="1" type="primary">pyrC</name>
    <name type="ordered locus">ECUMN_1236</name>
</gene>